<name>TRMB_STRGC</name>
<reference key="1">
    <citation type="journal article" date="2007" name="J. Bacteriol.">
        <title>Genome-wide transcriptional changes in Streptococcus gordonii in response to competence signaling peptide.</title>
        <authorList>
            <person name="Vickerman M.M."/>
            <person name="Iobst S."/>
            <person name="Jesionowski A.M."/>
            <person name="Gill S.R."/>
        </authorList>
    </citation>
    <scope>NUCLEOTIDE SEQUENCE [LARGE SCALE GENOMIC DNA]</scope>
    <source>
        <strain>Challis / ATCC 35105 / BCRC 15272 / CH1 / DL1 / V288</strain>
    </source>
</reference>
<proteinExistence type="inferred from homology"/>
<accession>A8AVP7</accession>
<comment type="function">
    <text evidence="2">Catalyzes the formation of N(7)-methylguanine at position 46 (m7G46) in tRNA.</text>
</comment>
<comment type="catalytic activity">
    <reaction evidence="2">
        <text>guanosine(46) in tRNA + S-adenosyl-L-methionine = N(7)-methylguanosine(46) in tRNA + S-adenosyl-L-homocysteine</text>
        <dbReference type="Rhea" id="RHEA:42708"/>
        <dbReference type="Rhea" id="RHEA-COMP:10188"/>
        <dbReference type="Rhea" id="RHEA-COMP:10189"/>
        <dbReference type="ChEBI" id="CHEBI:57856"/>
        <dbReference type="ChEBI" id="CHEBI:59789"/>
        <dbReference type="ChEBI" id="CHEBI:74269"/>
        <dbReference type="ChEBI" id="CHEBI:74480"/>
        <dbReference type="EC" id="2.1.1.33"/>
    </reaction>
</comment>
<comment type="pathway">
    <text evidence="2">tRNA modification; N(7)-methylguanine-tRNA biosynthesis.</text>
</comment>
<comment type="similarity">
    <text evidence="2">Belongs to the class I-like SAM-binding methyltransferase superfamily. TrmB family.</text>
</comment>
<dbReference type="EC" id="2.1.1.33" evidence="2"/>
<dbReference type="EMBL" id="CP000725">
    <property type="protein sequence ID" value="ABV10241.1"/>
    <property type="molecule type" value="Genomic_DNA"/>
</dbReference>
<dbReference type="RefSeq" id="WP_012000043.1">
    <property type="nucleotide sequence ID" value="NC_009785.1"/>
</dbReference>
<dbReference type="SMR" id="A8AVP7"/>
<dbReference type="STRING" id="467705.SGO_0541"/>
<dbReference type="KEGG" id="sgo:SGO_0541"/>
<dbReference type="eggNOG" id="COG0220">
    <property type="taxonomic scope" value="Bacteria"/>
</dbReference>
<dbReference type="HOGENOM" id="CLU_050910_2_1_9"/>
<dbReference type="UniPathway" id="UPA00989"/>
<dbReference type="Proteomes" id="UP000001131">
    <property type="component" value="Chromosome"/>
</dbReference>
<dbReference type="GO" id="GO:0043527">
    <property type="term" value="C:tRNA methyltransferase complex"/>
    <property type="evidence" value="ECO:0007669"/>
    <property type="project" value="TreeGrafter"/>
</dbReference>
<dbReference type="GO" id="GO:0008176">
    <property type="term" value="F:tRNA (guanine(46)-N7)-methyltransferase activity"/>
    <property type="evidence" value="ECO:0007669"/>
    <property type="project" value="UniProtKB-UniRule"/>
</dbReference>
<dbReference type="CDD" id="cd02440">
    <property type="entry name" value="AdoMet_MTases"/>
    <property type="match status" value="1"/>
</dbReference>
<dbReference type="FunFam" id="3.40.50.150:FF:000035">
    <property type="entry name" value="tRNA (guanine-N(7)-)-methyltransferase"/>
    <property type="match status" value="1"/>
</dbReference>
<dbReference type="Gene3D" id="3.40.50.150">
    <property type="entry name" value="Vaccinia Virus protein VP39"/>
    <property type="match status" value="1"/>
</dbReference>
<dbReference type="HAMAP" id="MF_01057">
    <property type="entry name" value="tRNA_methyltr_TrmB"/>
    <property type="match status" value="1"/>
</dbReference>
<dbReference type="InterPro" id="IPR029063">
    <property type="entry name" value="SAM-dependent_MTases_sf"/>
</dbReference>
<dbReference type="InterPro" id="IPR003358">
    <property type="entry name" value="tRNA_(Gua-N-7)_MeTrfase_Trmb"/>
</dbReference>
<dbReference type="InterPro" id="IPR055361">
    <property type="entry name" value="tRNA_methyltr_TrmB_bact"/>
</dbReference>
<dbReference type="NCBIfam" id="NF001080">
    <property type="entry name" value="PRK00121.2-2"/>
    <property type="match status" value="1"/>
</dbReference>
<dbReference type="NCBIfam" id="TIGR00091">
    <property type="entry name" value="tRNA (guanosine(46)-N7)-methyltransferase TrmB"/>
    <property type="match status" value="1"/>
</dbReference>
<dbReference type="PANTHER" id="PTHR23417">
    <property type="entry name" value="3-DEOXY-D-MANNO-OCTULOSONIC-ACID TRANSFERASE/TRNA GUANINE-N 7 - -METHYLTRANSFERASE"/>
    <property type="match status" value="1"/>
</dbReference>
<dbReference type="PANTHER" id="PTHR23417:SF14">
    <property type="entry name" value="PENTACOTRIPEPTIDE-REPEAT REGION OF PRORP DOMAIN-CONTAINING PROTEIN"/>
    <property type="match status" value="1"/>
</dbReference>
<dbReference type="Pfam" id="PF02390">
    <property type="entry name" value="Methyltransf_4"/>
    <property type="match status" value="1"/>
</dbReference>
<dbReference type="SUPFAM" id="SSF53335">
    <property type="entry name" value="S-adenosyl-L-methionine-dependent methyltransferases"/>
    <property type="match status" value="1"/>
</dbReference>
<dbReference type="PROSITE" id="PS51625">
    <property type="entry name" value="SAM_MT_TRMB"/>
    <property type="match status" value="1"/>
</dbReference>
<organism>
    <name type="scientific">Streptococcus gordonii (strain Challis / ATCC 35105 / BCRC 15272 / CH1 / DL1 / V288)</name>
    <dbReference type="NCBI Taxonomy" id="467705"/>
    <lineage>
        <taxon>Bacteria</taxon>
        <taxon>Bacillati</taxon>
        <taxon>Bacillota</taxon>
        <taxon>Bacilli</taxon>
        <taxon>Lactobacillales</taxon>
        <taxon>Streptococcaceae</taxon>
        <taxon>Streptococcus</taxon>
    </lineage>
</organism>
<sequence>MRVRNRKGATELLEANPQYVVLNPADAKGKWQELFGNDHPIHIEVGSGKGAFITGMAKANPNINYIGIDIQKSVLSYALDKVLATDVPNIKLLWVDGSDLTNYFADGEIERLYLNFSDPWPKKRHEKRRLTYKSFLDTFKQILPEKGEVHFKTDNRGLFEYSLVSFSQYGMKLKGVWLDLHASDFEGNVLTEYEQKFSSKGQVIYRVEAVFQ</sequence>
<gene>
    <name evidence="2" type="primary">trmB</name>
    <name type="ordered locus">SGO_0541</name>
</gene>
<protein>
    <recommendedName>
        <fullName evidence="2">tRNA (guanine-N(7)-)-methyltransferase</fullName>
        <ecNumber evidence="2">2.1.1.33</ecNumber>
    </recommendedName>
    <alternativeName>
        <fullName evidence="2">tRNA (guanine(46)-N(7))-methyltransferase</fullName>
    </alternativeName>
    <alternativeName>
        <fullName evidence="2">tRNA(m7G46)-methyltransferase</fullName>
    </alternativeName>
</protein>
<keyword id="KW-0489">Methyltransferase</keyword>
<keyword id="KW-1185">Reference proteome</keyword>
<keyword id="KW-0949">S-adenosyl-L-methionine</keyword>
<keyword id="KW-0808">Transferase</keyword>
<keyword id="KW-0819">tRNA processing</keyword>
<feature type="chain" id="PRO_1000084453" description="tRNA (guanine-N(7)-)-methyltransferase">
    <location>
        <begin position="1"/>
        <end position="212"/>
    </location>
</feature>
<feature type="region of interest" description="Interaction with RNA" evidence="2">
    <location>
        <begin position="124"/>
        <end position="129"/>
    </location>
</feature>
<feature type="active site" evidence="1">
    <location>
        <position position="118"/>
    </location>
</feature>
<feature type="binding site" evidence="2">
    <location>
        <position position="44"/>
    </location>
    <ligand>
        <name>S-adenosyl-L-methionine</name>
        <dbReference type="ChEBI" id="CHEBI:59789"/>
    </ligand>
</feature>
<feature type="binding site" evidence="2">
    <location>
        <position position="69"/>
    </location>
    <ligand>
        <name>S-adenosyl-L-methionine</name>
        <dbReference type="ChEBI" id="CHEBI:59789"/>
    </ligand>
</feature>
<feature type="binding site" evidence="2">
    <location>
        <position position="96"/>
    </location>
    <ligand>
        <name>S-adenosyl-L-methionine</name>
        <dbReference type="ChEBI" id="CHEBI:59789"/>
    </ligand>
</feature>
<feature type="binding site" evidence="2">
    <location>
        <position position="118"/>
    </location>
    <ligand>
        <name>S-adenosyl-L-methionine</name>
        <dbReference type="ChEBI" id="CHEBI:59789"/>
    </ligand>
</feature>
<feature type="binding site" evidence="2">
    <location>
        <position position="122"/>
    </location>
    <ligand>
        <name>substrate</name>
    </ligand>
</feature>
<feature type="binding site" evidence="2">
    <location>
        <position position="154"/>
    </location>
    <ligand>
        <name>substrate</name>
    </ligand>
</feature>
<feature type="binding site" evidence="2">
    <location>
        <begin position="191"/>
        <end position="194"/>
    </location>
    <ligand>
        <name>substrate</name>
    </ligand>
</feature>
<evidence type="ECO:0000250" key="1"/>
<evidence type="ECO:0000255" key="2">
    <source>
        <dbReference type="HAMAP-Rule" id="MF_01057"/>
    </source>
</evidence>